<accession>Q13795</accession>
<accession>A0A087WY13</accession>
<accession>B7ZKX7</accession>
<accession>E1P5J9</accession>
<accession>Q6IBQ0</accession>
<accession>V9GYH4</accession>
<organism>
    <name type="scientific">Homo sapiens</name>
    <name type="common">Human</name>
    <dbReference type="NCBI Taxonomy" id="9606"/>
    <lineage>
        <taxon>Eukaryota</taxon>
        <taxon>Metazoa</taxon>
        <taxon>Chordata</taxon>
        <taxon>Craniata</taxon>
        <taxon>Vertebrata</taxon>
        <taxon>Euteleostomi</taxon>
        <taxon>Mammalia</taxon>
        <taxon>Eutheria</taxon>
        <taxon>Euarchontoglires</taxon>
        <taxon>Primates</taxon>
        <taxon>Haplorrhini</taxon>
        <taxon>Catarrhini</taxon>
        <taxon>Hominidae</taxon>
        <taxon>Homo</taxon>
    </lineage>
</organism>
<gene>
    <name type="primary">ARFRP1</name>
    <name type="synonym">ARP1</name>
</gene>
<sequence>MYTLLSGLYKYMFQKDEYCILILGLDNAGKTTFLEQSKTRFNKNYKGMSLSKITTTVGLNIGTVDVGKARLMFWDLGGQEELQSLWDKYYAECHGVIYVIDSTDEERLAESKQAFEKVVTSEALCGVPVLVLANKQDVETCLSIPDIKTAFSDCTSKIGRRDCLTQACSALTGKGVREGIEWMVKCVVRNVHRPPRQRDIT</sequence>
<dbReference type="EMBL" id="X91504">
    <property type="protein sequence ID" value="CAA62804.1"/>
    <property type="molecule type" value="mRNA"/>
</dbReference>
<dbReference type="EMBL" id="AF217796">
    <property type="protein sequence ID" value="AAF35246.1"/>
    <property type="molecule type" value="Genomic_DNA"/>
</dbReference>
<dbReference type="EMBL" id="CR456752">
    <property type="protein sequence ID" value="CAG33033.1"/>
    <property type="molecule type" value="mRNA"/>
</dbReference>
<dbReference type="EMBL" id="BT019624">
    <property type="protein sequence ID" value="AAV38430.1"/>
    <property type="molecule type" value="mRNA"/>
</dbReference>
<dbReference type="EMBL" id="BT019663">
    <property type="protein sequence ID" value="AAV38469.1"/>
    <property type="molecule type" value="mRNA"/>
</dbReference>
<dbReference type="EMBL" id="AL121845">
    <property type="status" value="NOT_ANNOTATED_CDS"/>
    <property type="molecule type" value="Genomic_DNA"/>
</dbReference>
<dbReference type="EMBL" id="KF511326">
    <property type="status" value="NOT_ANNOTATED_CDS"/>
    <property type="molecule type" value="Genomic_DNA"/>
</dbReference>
<dbReference type="EMBL" id="CH471077">
    <property type="protein sequence ID" value="EAW75231.1"/>
    <property type="molecule type" value="Genomic_DNA"/>
</dbReference>
<dbReference type="EMBL" id="CH471077">
    <property type="protein sequence ID" value="EAW75232.1"/>
    <property type="molecule type" value="Genomic_DNA"/>
</dbReference>
<dbReference type="EMBL" id="CH471077">
    <property type="protein sequence ID" value="EAW75235.1"/>
    <property type="molecule type" value="Genomic_DNA"/>
</dbReference>
<dbReference type="EMBL" id="BC092480">
    <property type="protein sequence ID" value="AAH92480.1"/>
    <property type="molecule type" value="mRNA"/>
</dbReference>
<dbReference type="EMBL" id="BC093967">
    <property type="protein sequence ID" value="AAH93967.1"/>
    <property type="molecule type" value="mRNA"/>
</dbReference>
<dbReference type="EMBL" id="BC143447">
    <property type="protein sequence ID" value="AAI43448.1"/>
    <property type="molecule type" value="mRNA"/>
</dbReference>
<dbReference type="EMBL" id="BC143448">
    <property type="protein sequence ID" value="AAI43449.1"/>
    <property type="molecule type" value="mRNA"/>
</dbReference>
<dbReference type="CCDS" id="CCDS13533.1">
    <molecule id="Q13795-1"/>
</dbReference>
<dbReference type="CCDS" id="CCDS46630.1">
    <molecule id="Q13795-2"/>
</dbReference>
<dbReference type="CCDS" id="CCDS68172.1">
    <molecule id="Q13795-3"/>
</dbReference>
<dbReference type="CCDS" id="CCDS68173.1">
    <molecule id="Q13795-4"/>
</dbReference>
<dbReference type="RefSeq" id="NP_001128230.1">
    <molecule id="Q13795-2"/>
    <property type="nucleotide sequence ID" value="NM_001134758.4"/>
</dbReference>
<dbReference type="RefSeq" id="NP_001254474.1">
    <molecule id="Q13795-4"/>
    <property type="nucleotide sequence ID" value="NM_001267545.3"/>
</dbReference>
<dbReference type="RefSeq" id="NP_001254475.1">
    <molecule id="Q13795-3"/>
    <property type="nucleotide sequence ID" value="NM_001267546.3"/>
</dbReference>
<dbReference type="RefSeq" id="NP_001254476.1">
    <molecule id="Q13795-1"/>
    <property type="nucleotide sequence ID" value="NM_001267547.3"/>
</dbReference>
<dbReference type="RefSeq" id="NP_001254477.1">
    <molecule id="Q13795-1"/>
    <property type="nucleotide sequence ID" value="NM_001267548.3"/>
</dbReference>
<dbReference type="RefSeq" id="NP_001254478.1">
    <molecule id="Q13795-2"/>
    <property type="nucleotide sequence ID" value="NM_001267549.3"/>
</dbReference>
<dbReference type="RefSeq" id="NP_003215.1">
    <molecule id="Q13795-1"/>
    <property type="nucleotide sequence ID" value="NM_003224.6"/>
</dbReference>
<dbReference type="RefSeq" id="XP_011526784.1">
    <molecule id="Q13795-1"/>
    <property type="nucleotide sequence ID" value="XM_011528482.4"/>
</dbReference>
<dbReference type="RefSeq" id="XP_011526785.1">
    <molecule id="Q13795-1"/>
    <property type="nucleotide sequence ID" value="XM_011528483.2"/>
</dbReference>
<dbReference type="RefSeq" id="XP_016883065.1">
    <property type="nucleotide sequence ID" value="XM_017027576.1"/>
</dbReference>
<dbReference type="RefSeq" id="XP_047295777.1">
    <molecule id="Q13795-1"/>
    <property type="nucleotide sequence ID" value="XM_047439821.1"/>
</dbReference>
<dbReference type="RefSeq" id="XP_054178795.1">
    <molecule id="Q13795-1"/>
    <property type="nucleotide sequence ID" value="XM_054322820.1"/>
</dbReference>
<dbReference type="RefSeq" id="XP_054178796.1">
    <molecule id="Q13795-1"/>
    <property type="nucleotide sequence ID" value="XM_054322821.1"/>
</dbReference>
<dbReference type="RefSeq" id="XP_054178797.1">
    <molecule id="Q13795-1"/>
    <property type="nucleotide sequence ID" value="XM_054322822.1"/>
</dbReference>
<dbReference type="SMR" id="Q13795"/>
<dbReference type="BioGRID" id="115442">
    <property type="interactions" value="29"/>
</dbReference>
<dbReference type="FunCoup" id="Q13795">
    <property type="interactions" value="2368"/>
</dbReference>
<dbReference type="IntAct" id="Q13795">
    <property type="interactions" value="4"/>
</dbReference>
<dbReference type="STRING" id="9606.ENSP00000483486"/>
<dbReference type="iPTMnet" id="Q13795"/>
<dbReference type="PhosphoSitePlus" id="Q13795"/>
<dbReference type="SwissPalm" id="Q13795"/>
<dbReference type="BioMuta" id="ARFRP1"/>
<dbReference type="DMDM" id="2492927"/>
<dbReference type="jPOST" id="Q13795"/>
<dbReference type="MassIVE" id="Q13795"/>
<dbReference type="PaxDb" id="9606-ENSP00000483486"/>
<dbReference type="PeptideAtlas" id="Q13795"/>
<dbReference type="ProteomicsDB" id="59685">
    <molecule id="Q13795-1"/>
</dbReference>
<dbReference type="ProteomicsDB" id="59686">
    <molecule id="Q13795-2"/>
</dbReference>
<dbReference type="Pumba" id="Q13795"/>
<dbReference type="Antibodypedia" id="29845">
    <property type="antibodies" value="124 antibodies from 26 providers"/>
</dbReference>
<dbReference type="DNASU" id="10139"/>
<dbReference type="Ensembl" id="ENST00000607873.1">
    <molecule id="Q13795-3"/>
    <property type="protein sequence ID" value="ENSP00000476756.1"/>
    <property type="gene ID" value="ENSG00000101246.20"/>
</dbReference>
<dbReference type="Ensembl" id="ENST00000612157.4">
    <molecule id="Q13795-2"/>
    <property type="protein sequence ID" value="ENSP00000479058.1"/>
    <property type="gene ID" value="ENSG00000101246.20"/>
</dbReference>
<dbReference type="Ensembl" id="ENST00000612256.4">
    <molecule id="Q13795-3"/>
    <property type="protein sequence ID" value="ENSP00000484109.1"/>
    <property type="gene ID" value="ENSG00000101246.20"/>
</dbReference>
<dbReference type="Ensembl" id="ENST00000614942.4">
    <molecule id="Q13795-4"/>
    <property type="protein sequence ID" value="ENSP00000483130.1"/>
    <property type="gene ID" value="ENSG00000101246.20"/>
</dbReference>
<dbReference type="Ensembl" id="ENST00000618568.4">
    <molecule id="Q13795-4"/>
    <property type="protein sequence ID" value="ENSP00000481446.1"/>
    <property type="gene ID" value="ENSG00000101246.20"/>
</dbReference>
<dbReference type="Ensembl" id="ENST00000618838.4">
    <molecule id="Q13795-1"/>
    <property type="protein sequence ID" value="ENSP00000479616.1"/>
    <property type="gene ID" value="ENSG00000101246.20"/>
</dbReference>
<dbReference type="Ensembl" id="ENST00000619493.4">
    <molecule id="Q13795-1"/>
    <property type="protein sequence ID" value="ENSP00000479940.1"/>
    <property type="gene ID" value="ENSG00000101246.20"/>
</dbReference>
<dbReference type="Ensembl" id="ENST00000622789.5">
    <molecule id="Q13795-1"/>
    <property type="protein sequence ID" value="ENSP00000483486.1"/>
    <property type="gene ID" value="ENSG00000101246.20"/>
</dbReference>
<dbReference type="GeneID" id="10139"/>
<dbReference type="KEGG" id="hsa:10139"/>
<dbReference type="MANE-Select" id="ENST00000622789.5">
    <property type="protein sequence ID" value="ENSP00000483486.1"/>
    <property type="RefSeq nucleotide sequence ID" value="NM_001267547.3"/>
    <property type="RefSeq protein sequence ID" value="NP_001254476.1"/>
</dbReference>
<dbReference type="UCSC" id="uc032ppa.2">
    <property type="organism name" value="human"/>
</dbReference>
<dbReference type="UCSC" id="uc032ppb.2">
    <molecule id="Q13795-1"/>
    <property type="organism name" value="human"/>
</dbReference>
<dbReference type="UCSC" id="uc032ppd.2">
    <property type="organism name" value="human"/>
</dbReference>
<dbReference type="AGR" id="HGNC:662"/>
<dbReference type="CTD" id="10139"/>
<dbReference type="DisGeNET" id="10139"/>
<dbReference type="GeneCards" id="ARFRP1"/>
<dbReference type="HGNC" id="HGNC:662">
    <property type="gene designation" value="ARFRP1"/>
</dbReference>
<dbReference type="HPA" id="ENSG00000101246">
    <property type="expression patterns" value="Low tissue specificity"/>
</dbReference>
<dbReference type="MalaCards" id="ARFRP1"/>
<dbReference type="MIM" id="604699">
    <property type="type" value="gene"/>
</dbReference>
<dbReference type="neXtProt" id="NX_Q13795"/>
<dbReference type="OpenTargets" id="ENSG00000101246"/>
<dbReference type="PharmGKB" id="PA24946"/>
<dbReference type="VEuPathDB" id="HostDB:ENSG00000101246"/>
<dbReference type="eggNOG" id="KOG0076">
    <property type="taxonomic scope" value="Eukaryota"/>
</dbReference>
<dbReference type="GeneTree" id="ENSGT00940000156407"/>
<dbReference type="HOGENOM" id="CLU_040729_7_2_1"/>
<dbReference type="InParanoid" id="Q13795"/>
<dbReference type="OMA" id="HGFYKYM"/>
<dbReference type="PAN-GO" id="Q13795">
    <property type="GO annotations" value="6 GO annotations based on evolutionary models"/>
</dbReference>
<dbReference type="PhylomeDB" id="Q13795"/>
<dbReference type="TreeFam" id="TF105788"/>
<dbReference type="PathwayCommons" id="Q13795"/>
<dbReference type="Reactome" id="R-HSA-6811440">
    <property type="pathway name" value="Retrograde transport at the Trans-Golgi-Network"/>
</dbReference>
<dbReference type="SignaLink" id="Q13795"/>
<dbReference type="BioGRID-ORCS" id="10139">
    <property type="hits" value="563 hits in 1169 CRISPR screens"/>
</dbReference>
<dbReference type="ChiTaRS" id="ARFRP1">
    <property type="organism name" value="human"/>
</dbReference>
<dbReference type="GeneWiki" id="ARFRP1"/>
<dbReference type="GenomeRNAi" id="10139"/>
<dbReference type="Pharos" id="Q13795">
    <property type="development level" value="Tbio"/>
</dbReference>
<dbReference type="PRO" id="PR:Q13795"/>
<dbReference type="Proteomes" id="UP000005640">
    <property type="component" value="Chromosome 20"/>
</dbReference>
<dbReference type="RNAct" id="Q13795">
    <property type="molecule type" value="protein"/>
</dbReference>
<dbReference type="Bgee" id="ENSG00000101246">
    <property type="expression patterns" value="Expressed in type B pancreatic cell and 203 other cell types or tissues"/>
</dbReference>
<dbReference type="ExpressionAtlas" id="Q13795">
    <property type="expression patterns" value="baseline and differential"/>
</dbReference>
<dbReference type="GO" id="GO:0005829">
    <property type="term" value="C:cytosol"/>
    <property type="evidence" value="ECO:0000304"/>
    <property type="project" value="Reactome"/>
</dbReference>
<dbReference type="GO" id="GO:0005794">
    <property type="term" value="C:Golgi apparatus"/>
    <property type="evidence" value="ECO:0000314"/>
    <property type="project" value="HPA"/>
</dbReference>
<dbReference type="GO" id="GO:0016020">
    <property type="term" value="C:membrane"/>
    <property type="evidence" value="ECO:0000304"/>
    <property type="project" value="ProtInc"/>
</dbReference>
<dbReference type="GO" id="GO:0005802">
    <property type="term" value="C:trans-Golgi network"/>
    <property type="evidence" value="ECO:0000314"/>
    <property type="project" value="UniProtKB"/>
</dbReference>
<dbReference type="GO" id="GO:0032588">
    <property type="term" value="C:trans-Golgi network membrane"/>
    <property type="evidence" value="ECO:0000304"/>
    <property type="project" value="Reactome"/>
</dbReference>
<dbReference type="GO" id="GO:0005525">
    <property type="term" value="F:GTP binding"/>
    <property type="evidence" value="ECO:0000318"/>
    <property type="project" value="GO_Central"/>
</dbReference>
<dbReference type="GO" id="GO:0003924">
    <property type="term" value="F:GTPase activity"/>
    <property type="evidence" value="ECO:0000318"/>
    <property type="project" value="GO_Central"/>
</dbReference>
<dbReference type="GO" id="GO:0007369">
    <property type="term" value="P:gastrulation"/>
    <property type="evidence" value="ECO:0007669"/>
    <property type="project" value="Ensembl"/>
</dbReference>
<dbReference type="GO" id="GO:0043001">
    <property type="term" value="P:Golgi to plasma membrane protein transport"/>
    <property type="evidence" value="ECO:0000315"/>
    <property type="project" value="UniProtKB"/>
</dbReference>
<dbReference type="GO" id="GO:0006886">
    <property type="term" value="P:intracellular protein transport"/>
    <property type="evidence" value="ECO:0000318"/>
    <property type="project" value="GO_Central"/>
</dbReference>
<dbReference type="GO" id="GO:0034067">
    <property type="term" value="P:protein localization to Golgi apparatus"/>
    <property type="evidence" value="ECO:0000315"/>
    <property type="project" value="UniProtKB"/>
</dbReference>
<dbReference type="GO" id="GO:0042147">
    <property type="term" value="P:retrograde transport, endosome to Golgi"/>
    <property type="evidence" value="ECO:0000315"/>
    <property type="project" value="UniProtKB"/>
</dbReference>
<dbReference type="GO" id="GO:0007165">
    <property type="term" value="P:signal transduction"/>
    <property type="evidence" value="ECO:0000304"/>
    <property type="project" value="ProtInc"/>
</dbReference>
<dbReference type="CDD" id="cd04160">
    <property type="entry name" value="Arfrp1"/>
    <property type="match status" value="1"/>
</dbReference>
<dbReference type="FunFam" id="3.40.50.300:FF:000509">
    <property type="entry name" value="ADP-ribosylation factor-related protein 1"/>
    <property type="match status" value="1"/>
</dbReference>
<dbReference type="Gene3D" id="3.40.50.300">
    <property type="entry name" value="P-loop containing nucleotide triphosphate hydrolases"/>
    <property type="match status" value="1"/>
</dbReference>
<dbReference type="InterPro" id="IPR027417">
    <property type="entry name" value="P-loop_NTPase"/>
</dbReference>
<dbReference type="InterPro" id="IPR005225">
    <property type="entry name" value="Small_GTP-bd"/>
</dbReference>
<dbReference type="InterPro" id="IPR024156">
    <property type="entry name" value="Small_GTPase_ARF"/>
</dbReference>
<dbReference type="InterPro" id="IPR006689">
    <property type="entry name" value="Small_GTPase_ARF/SAR"/>
</dbReference>
<dbReference type="NCBIfam" id="TIGR00231">
    <property type="entry name" value="small_GTP"/>
    <property type="match status" value="1"/>
</dbReference>
<dbReference type="PANTHER" id="PTHR45909">
    <property type="entry name" value="ADP-RIBOSYLATION FACTOR-RELATED PROTEIN 1"/>
    <property type="match status" value="1"/>
</dbReference>
<dbReference type="PANTHER" id="PTHR45909:SF1">
    <property type="entry name" value="ADP-RIBOSYLATION FACTOR-RELATED PROTEIN 1"/>
    <property type="match status" value="1"/>
</dbReference>
<dbReference type="Pfam" id="PF00025">
    <property type="entry name" value="Arf"/>
    <property type="match status" value="1"/>
</dbReference>
<dbReference type="PRINTS" id="PR00449">
    <property type="entry name" value="RASTRNSFRMNG"/>
</dbReference>
<dbReference type="SMART" id="SM00177">
    <property type="entry name" value="ARF"/>
    <property type="match status" value="1"/>
</dbReference>
<dbReference type="SMART" id="SM00175">
    <property type="entry name" value="RAB"/>
    <property type="match status" value="1"/>
</dbReference>
<dbReference type="SMART" id="SM00178">
    <property type="entry name" value="SAR"/>
    <property type="match status" value="1"/>
</dbReference>
<dbReference type="SUPFAM" id="SSF52540">
    <property type="entry name" value="P-loop containing nucleoside triphosphate hydrolases"/>
    <property type="match status" value="1"/>
</dbReference>
<dbReference type="PROSITE" id="PS51417">
    <property type="entry name" value="ARF"/>
    <property type="match status" value="1"/>
</dbReference>
<feature type="chain" id="PRO_0000207487" description="ADP-ribosylation factor-related protein 1">
    <location>
        <begin position="1"/>
        <end position="201"/>
    </location>
</feature>
<feature type="binding site" evidence="1">
    <location>
        <begin position="24"/>
        <end position="31"/>
    </location>
    <ligand>
        <name>GTP</name>
        <dbReference type="ChEBI" id="CHEBI:37565"/>
    </ligand>
</feature>
<feature type="binding site" evidence="1">
    <location>
        <begin position="75"/>
        <end position="79"/>
    </location>
    <ligand>
        <name>GTP</name>
        <dbReference type="ChEBI" id="CHEBI:37565"/>
    </ligand>
</feature>
<feature type="binding site" evidence="1">
    <location>
        <begin position="134"/>
        <end position="137"/>
    </location>
    <ligand>
        <name>GTP</name>
        <dbReference type="ChEBI" id="CHEBI:37565"/>
    </ligand>
</feature>
<feature type="modified residue" description="N-acetylmethionine" evidence="7">
    <location>
        <position position="1"/>
    </location>
</feature>
<feature type="splice variant" id="VSP_057570" description="In isoform 3.">
    <location>
        <begin position="1"/>
        <end position="47"/>
    </location>
</feature>
<feature type="splice variant" id="VSP_057571" description="In isoform 4.">
    <original>EKVVTS</original>
    <variation>DVPLNP</variation>
    <location>
        <begin position="116"/>
        <end position="121"/>
    </location>
</feature>
<feature type="splice variant" id="VSP_057572" description="In isoform 4.">
    <location>
        <begin position="122"/>
        <end position="201"/>
    </location>
</feature>
<feature type="splice variant" id="VSP_043531" description="In isoform 2." evidence="5">
    <location>
        <begin position="174"/>
        <end position="201"/>
    </location>
</feature>
<feature type="sequence variant" id="VAR_036559" description="In a breast cancer sample; somatic mutation." evidence="4">
    <original>L</original>
    <variation>V</variation>
    <location>
        <position position="108"/>
    </location>
</feature>
<reference key="1">
    <citation type="journal article" date="1995" name="J. Biol. Chem.">
        <title>ARP is a plasma membrane-associated Ras-related GTPase with remote similarity to the family of ADP-ribosylation factors.</title>
        <authorList>
            <person name="Schuermann A."/>
            <person name="Massmann S."/>
            <person name="Joost H.-G."/>
        </authorList>
    </citation>
    <scope>NUCLEOTIDE SEQUENCE [MRNA] (ISOFORM 1)</scope>
    <source>
        <tissue>Brain</tissue>
    </source>
</reference>
<reference key="2">
    <citation type="journal article" date="2000" name="Proc. Natl. Acad. Sci. U.S.A.">
        <title>Overexpression of M68/DcR3 in human gastrointestinal tract tumors independent of gene amplification and its location in a four-gene cluster.</title>
        <authorList>
            <person name="Bai C."/>
            <person name="Connolly B."/>
            <person name="Metzker M.L."/>
            <person name="Hilliard C.A."/>
            <person name="Liu X."/>
            <person name="Sandig V."/>
            <person name="Soderman A."/>
            <person name="Galloway S.M."/>
            <person name="Liu Q."/>
            <person name="Austin C.P."/>
            <person name="Caskey C.T."/>
        </authorList>
    </citation>
    <scope>NUCLEOTIDE SEQUENCE [GENOMIC DNA]</scope>
</reference>
<reference key="3">
    <citation type="submission" date="2004-06" db="EMBL/GenBank/DDBJ databases">
        <title>Cloning of human full open reading frames in Gateway(TM) system entry vector (pDONR201).</title>
        <authorList>
            <person name="Ebert L."/>
            <person name="Schick M."/>
            <person name="Neubert P."/>
            <person name="Schatten R."/>
            <person name="Henze S."/>
            <person name="Korn B."/>
        </authorList>
    </citation>
    <scope>NUCLEOTIDE SEQUENCE [LARGE SCALE MRNA] (ISOFORM 1)</scope>
</reference>
<reference key="4">
    <citation type="submission" date="2004-10" db="EMBL/GenBank/DDBJ databases">
        <title>Cloning of human full-length CDSs in BD Creator(TM) system donor vector.</title>
        <authorList>
            <person name="Kalnine N."/>
            <person name="Chen X."/>
            <person name="Rolfs A."/>
            <person name="Halleck A."/>
            <person name="Hines L."/>
            <person name="Eisenstein S."/>
            <person name="Koundinya M."/>
            <person name="Raphael J."/>
            <person name="Moreira D."/>
            <person name="Kelley T."/>
            <person name="LaBaer J."/>
            <person name="Lin Y."/>
            <person name="Phelan M."/>
            <person name="Farmer A."/>
        </authorList>
    </citation>
    <scope>NUCLEOTIDE SEQUENCE [LARGE SCALE MRNA] (ISOFORM 1)</scope>
</reference>
<reference key="5">
    <citation type="journal article" date="2001" name="Nature">
        <title>The DNA sequence and comparative analysis of human chromosome 20.</title>
        <authorList>
            <person name="Deloukas P."/>
            <person name="Matthews L.H."/>
            <person name="Ashurst J.L."/>
            <person name="Burton J."/>
            <person name="Gilbert J.G.R."/>
            <person name="Jones M."/>
            <person name="Stavrides G."/>
            <person name="Almeida J.P."/>
            <person name="Babbage A.K."/>
            <person name="Bagguley C.L."/>
            <person name="Bailey J."/>
            <person name="Barlow K.F."/>
            <person name="Bates K.N."/>
            <person name="Beard L.M."/>
            <person name="Beare D.M."/>
            <person name="Beasley O.P."/>
            <person name="Bird C.P."/>
            <person name="Blakey S.E."/>
            <person name="Bridgeman A.M."/>
            <person name="Brown A.J."/>
            <person name="Buck D."/>
            <person name="Burrill W.D."/>
            <person name="Butler A.P."/>
            <person name="Carder C."/>
            <person name="Carter N.P."/>
            <person name="Chapman J.C."/>
            <person name="Clamp M."/>
            <person name="Clark G."/>
            <person name="Clark L.N."/>
            <person name="Clark S.Y."/>
            <person name="Clee C.M."/>
            <person name="Clegg S."/>
            <person name="Cobley V.E."/>
            <person name="Collier R.E."/>
            <person name="Connor R.E."/>
            <person name="Corby N.R."/>
            <person name="Coulson A."/>
            <person name="Coville G.J."/>
            <person name="Deadman R."/>
            <person name="Dhami P.D."/>
            <person name="Dunn M."/>
            <person name="Ellington A.G."/>
            <person name="Frankland J.A."/>
            <person name="Fraser A."/>
            <person name="French L."/>
            <person name="Garner P."/>
            <person name="Grafham D.V."/>
            <person name="Griffiths C."/>
            <person name="Griffiths M.N.D."/>
            <person name="Gwilliam R."/>
            <person name="Hall R.E."/>
            <person name="Hammond S."/>
            <person name="Harley J.L."/>
            <person name="Heath P.D."/>
            <person name="Ho S."/>
            <person name="Holden J.L."/>
            <person name="Howden P.J."/>
            <person name="Huckle E."/>
            <person name="Hunt A.R."/>
            <person name="Hunt S.E."/>
            <person name="Jekosch K."/>
            <person name="Johnson C.M."/>
            <person name="Johnson D."/>
            <person name="Kay M.P."/>
            <person name="Kimberley A.M."/>
            <person name="King A."/>
            <person name="Knights A."/>
            <person name="Laird G.K."/>
            <person name="Lawlor S."/>
            <person name="Lehvaeslaiho M.H."/>
            <person name="Leversha M.A."/>
            <person name="Lloyd C."/>
            <person name="Lloyd D.M."/>
            <person name="Lovell J.D."/>
            <person name="Marsh V.L."/>
            <person name="Martin S.L."/>
            <person name="McConnachie L.J."/>
            <person name="McLay K."/>
            <person name="McMurray A.A."/>
            <person name="Milne S.A."/>
            <person name="Mistry D."/>
            <person name="Moore M.J.F."/>
            <person name="Mullikin J.C."/>
            <person name="Nickerson T."/>
            <person name="Oliver K."/>
            <person name="Parker A."/>
            <person name="Patel R."/>
            <person name="Pearce T.A.V."/>
            <person name="Peck A.I."/>
            <person name="Phillimore B.J.C.T."/>
            <person name="Prathalingam S.R."/>
            <person name="Plumb R.W."/>
            <person name="Ramsay H."/>
            <person name="Rice C.M."/>
            <person name="Ross M.T."/>
            <person name="Scott C.E."/>
            <person name="Sehra H.K."/>
            <person name="Shownkeen R."/>
            <person name="Sims S."/>
            <person name="Skuce C.D."/>
            <person name="Smith M.L."/>
            <person name="Soderlund C."/>
            <person name="Steward C.A."/>
            <person name="Sulston J.E."/>
            <person name="Swann R.M."/>
            <person name="Sycamore N."/>
            <person name="Taylor R."/>
            <person name="Tee L."/>
            <person name="Thomas D.W."/>
            <person name="Thorpe A."/>
            <person name="Tracey A."/>
            <person name="Tromans A.C."/>
            <person name="Vaudin M."/>
            <person name="Wall M."/>
            <person name="Wallis J.M."/>
            <person name="Whitehead S.L."/>
            <person name="Whittaker P."/>
            <person name="Willey D.L."/>
            <person name="Williams L."/>
            <person name="Williams S.A."/>
            <person name="Wilming L."/>
            <person name="Wray P.W."/>
            <person name="Hubbard T."/>
            <person name="Durbin R.M."/>
            <person name="Bentley D.R."/>
            <person name="Beck S."/>
            <person name="Rogers J."/>
        </authorList>
    </citation>
    <scope>NUCLEOTIDE SEQUENCE [LARGE SCALE GENOMIC DNA]</scope>
</reference>
<reference key="6">
    <citation type="submission" date="2005-09" db="EMBL/GenBank/DDBJ databases">
        <authorList>
            <person name="Mural R.J."/>
            <person name="Istrail S."/>
            <person name="Sutton G.G."/>
            <person name="Florea L."/>
            <person name="Halpern A.L."/>
            <person name="Mobarry C.M."/>
            <person name="Lippert R."/>
            <person name="Walenz B."/>
            <person name="Shatkay H."/>
            <person name="Dew I."/>
            <person name="Miller J.R."/>
            <person name="Flanigan M.J."/>
            <person name="Edwards N.J."/>
            <person name="Bolanos R."/>
            <person name="Fasulo D."/>
            <person name="Halldorsson B.V."/>
            <person name="Hannenhalli S."/>
            <person name="Turner R."/>
            <person name="Yooseph S."/>
            <person name="Lu F."/>
            <person name="Nusskern D.R."/>
            <person name="Shue B.C."/>
            <person name="Zheng X.H."/>
            <person name="Zhong F."/>
            <person name="Delcher A.L."/>
            <person name="Huson D.H."/>
            <person name="Kravitz S.A."/>
            <person name="Mouchard L."/>
            <person name="Reinert K."/>
            <person name="Remington K.A."/>
            <person name="Clark A.G."/>
            <person name="Waterman M.S."/>
            <person name="Eichler E.E."/>
            <person name="Adams M.D."/>
            <person name="Hunkapiller M.W."/>
            <person name="Myers E.W."/>
            <person name="Venter J.C."/>
        </authorList>
    </citation>
    <scope>NUCLEOTIDE SEQUENCE [LARGE SCALE GENOMIC DNA]</scope>
</reference>
<reference key="7">
    <citation type="journal article" date="2004" name="Genome Res.">
        <title>The status, quality, and expansion of the NIH full-length cDNA project: the Mammalian Gene Collection (MGC).</title>
        <authorList>
            <consortium name="The MGC Project Team"/>
        </authorList>
    </citation>
    <scope>NUCLEOTIDE SEQUENCE [LARGE SCALE MRNA] (ISOFORMS 1 AND 2)</scope>
    <source>
        <tissue>Brain</tissue>
        <tissue>Placenta</tissue>
    </source>
</reference>
<reference key="8">
    <citation type="journal article" date="2004" name="Nat. Cell Biol.">
        <title>Targeting of the Arf-like GTPase Arl3p to the Golgi requires N-terminal acetylation and the membrane protein Sys1p.</title>
        <authorList>
            <person name="Behnia R."/>
            <person name="Panic B."/>
            <person name="Whyte J.R.C."/>
            <person name="Munro S."/>
        </authorList>
    </citation>
    <scope>SUBCELLULAR LOCATION</scope>
    <scope>INTERACTION WITH SYS1</scope>
</reference>
<reference key="9">
    <citation type="journal article" date="2012" name="Mol. Cell. Proteomics">
        <title>Comparative large-scale characterisation of plant vs. mammal proteins reveals similar and idiosyncratic N-alpha acetylation features.</title>
        <authorList>
            <person name="Bienvenut W.V."/>
            <person name="Sumpton D."/>
            <person name="Martinez A."/>
            <person name="Lilla S."/>
            <person name="Espagne C."/>
            <person name="Meinnel T."/>
            <person name="Giglione C."/>
        </authorList>
    </citation>
    <scope>ACETYLATION [LARGE SCALE ANALYSIS] AT MET-1</scope>
    <scope>IDENTIFICATION BY MASS SPECTROMETRY [LARGE SCALE ANALYSIS]</scope>
</reference>
<reference key="10">
    <citation type="journal article" date="2006" name="Science">
        <title>The consensus coding sequences of human breast and colorectal cancers.</title>
        <authorList>
            <person name="Sjoeblom T."/>
            <person name="Jones S."/>
            <person name="Wood L.D."/>
            <person name="Parsons D.W."/>
            <person name="Lin J."/>
            <person name="Barber T.D."/>
            <person name="Mandelker D."/>
            <person name="Leary R.J."/>
            <person name="Ptak J."/>
            <person name="Silliman N."/>
            <person name="Szabo S."/>
            <person name="Buckhaults P."/>
            <person name="Farrell C."/>
            <person name="Meeh P."/>
            <person name="Markowitz S.D."/>
            <person name="Willis J."/>
            <person name="Dawson D."/>
            <person name="Willson J.K.V."/>
            <person name="Gazdar A.F."/>
            <person name="Hartigan J."/>
            <person name="Wu L."/>
            <person name="Liu C."/>
            <person name="Parmigiani G."/>
            <person name="Park B.H."/>
            <person name="Bachman K.E."/>
            <person name="Papadopoulos N."/>
            <person name="Vogelstein B."/>
            <person name="Kinzler K.W."/>
            <person name="Velculescu V.E."/>
        </authorList>
    </citation>
    <scope>VARIANT [LARGE SCALE ANALYSIS] VAL-108</scope>
</reference>
<proteinExistence type="evidence at protein level"/>
<comment type="function">
    <text evidence="2">Trans-Golgi-associated GTPase that regulates protein sorting. Controls the targeting of ARL1 and its effector to the trans-Golgi. Required for the lipidation of chylomicrons in the intestine and required for VLDL lipidation in the liver.</text>
</comment>
<comment type="subunit">
    <text evidence="3">Interacts with SYS1.</text>
</comment>
<comment type="subcellular location">
    <subcellularLocation>
        <location evidence="3">Golgi apparatus</location>
    </subcellularLocation>
    <subcellularLocation>
        <location evidence="2">Golgi apparatus</location>
        <location evidence="2">trans-Golgi network</location>
    </subcellularLocation>
    <text evidence="2">Located in the trans-Golgi in the GTP-bound active state.</text>
</comment>
<comment type="alternative products">
    <event type="alternative splicing"/>
    <isoform>
        <id>Q13795-1</id>
        <name>1</name>
        <sequence type="displayed"/>
    </isoform>
    <isoform>
        <id>Q13795-2</id>
        <name>2</name>
        <sequence type="described" ref="VSP_043531"/>
    </isoform>
    <isoform>
        <id>Q13795-3</id>
        <name>3</name>
        <sequence type="described" ref="VSP_057570"/>
    </isoform>
    <isoform>
        <id>Q13795-4</id>
        <name>4</name>
        <sequence type="described" ref="VSP_057571 VSP_057572"/>
    </isoform>
</comment>
<comment type="tissue specificity">
    <text>Found in most tissues.</text>
</comment>
<comment type="similarity">
    <text evidence="6">Belongs to the small GTPase superfamily. Arf family.</text>
</comment>
<keyword id="KW-0007">Acetylation</keyword>
<keyword id="KW-0025">Alternative splicing</keyword>
<keyword id="KW-0333">Golgi apparatus</keyword>
<keyword id="KW-0342">GTP-binding</keyword>
<keyword id="KW-0547">Nucleotide-binding</keyword>
<keyword id="KW-1267">Proteomics identification</keyword>
<keyword id="KW-1185">Reference proteome</keyword>
<name>ARFRP_HUMAN</name>
<evidence type="ECO:0000250" key="1"/>
<evidence type="ECO:0000250" key="2">
    <source>
        <dbReference type="UniProtKB" id="Q8BXL7"/>
    </source>
</evidence>
<evidence type="ECO:0000269" key="3">
    <source>
    </source>
</evidence>
<evidence type="ECO:0000269" key="4">
    <source>
    </source>
</evidence>
<evidence type="ECO:0000303" key="5">
    <source>
    </source>
</evidence>
<evidence type="ECO:0000305" key="6"/>
<evidence type="ECO:0007744" key="7">
    <source>
    </source>
</evidence>
<protein>
    <recommendedName>
        <fullName>ADP-ribosylation factor-related protein 1</fullName>
        <shortName>ARF-related protein 1</shortName>
        <shortName>ARP</shortName>
    </recommendedName>
</protein>